<reference evidence="6 7" key="1">
    <citation type="journal article" date="2008" name="Rapid Commun. Mass Spectrom.">
        <title>The fallaxidin peptides from the skin secretion of the eastern dwarf tree frog Litoria fallax. Sequence determination by positive and negative ion electrospray mass spectrometry: antimicrobial activity and cDNA cloning of the fallaxidins.</title>
        <authorList>
            <person name="Jackway R.J."/>
            <person name="Bowie J.H."/>
            <person name="Bilusich D."/>
            <person name="Musgrave I.F."/>
            <person name="Surinya-Johnson K.H."/>
            <person name="Tyler M.J."/>
            <person name="Eichinger P.C.H."/>
        </authorList>
    </citation>
    <scope>NUCLEOTIDE SEQUENCE [MRNA]</scope>
    <scope>TISSUE SPECIFICITY</scope>
    <source>
        <tissue evidence="7">Skin</tissue>
    </source>
</reference>
<sequence length="67" mass="7647">MASLKKFLFLVLFLGMVSLSICDKEKREGENEEEEEEHEEESEEKRGLFSFLPKVIGVIGPLIHPPS</sequence>
<evidence type="ECO:0000250" key="1">
    <source>
        <dbReference type="UniProtKB" id="B5LUQ4"/>
    </source>
</evidence>
<evidence type="ECO:0000255" key="2"/>
<evidence type="ECO:0000256" key="3">
    <source>
        <dbReference type="SAM" id="MobiDB-lite"/>
    </source>
</evidence>
<evidence type="ECO:0000269" key="4">
    <source>
    </source>
</evidence>
<evidence type="ECO:0000303" key="5">
    <source>
    </source>
</evidence>
<evidence type="ECO:0000305" key="6"/>
<evidence type="ECO:0000312" key="7">
    <source>
        <dbReference type="EMBL" id="ACH53448.1"/>
    </source>
</evidence>
<dbReference type="EMBL" id="EU912530">
    <property type="protein sequence ID" value="ACH53448.1"/>
    <property type="molecule type" value="mRNA"/>
</dbReference>
<dbReference type="GO" id="GO:0005576">
    <property type="term" value="C:extracellular region"/>
    <property type="evidence" value="ECO:0000314"/>
    <property type="project" value="UniProtKB"/>
</dbReference>
<dbReference type="GO" id="GO:0006952">
    <property type="term" value="P:defense response"/>
    <property type="evidence" value="ECO:0007669"/>
    <property type="project" value="UniProtKB-KW"/>
</dbReference>
<dbReference type="InterPro" id="IPR004275">
    <property type="entry name" value="Frog_antimicrobial_propeptide"/>
</dbReference>
<dbReference type="InterPro" id="IPR016322">
    <property type="entry name" value="FSAP"/>
</dbReference>
<dbReference type="Pfam" id="PF03032">
    <property type="entry name" value="FSAP_sig_propep"/>
    <property type="match status" value="1"/>
</dbReference>
<dbReference type="PIRSF" id="PIRSF001822">
    <property type="entry name" value="Dermaseptin_precursor"/>
    <property type="match status" value="1"/>
</dbReference>
<feature type="signal peptide" evidence="2 7">
    <location>
        <begin position="1"/>
        <end position="22"/>
    </location>
</feature>
<feature type="propeptide" id="PRO_0000361717" evidence="4">
    <location>
        <begin position="23"/>
        <end position="46"/>
    </location>
</feature>
<feature type="peptide" id="PRO_0000361718" description="Fallaxidin-4.2">
    <location>
        <begin position="47"/>
        <end position="67"/>
    </location>
</feature>
<feature type="region of interest" description="Disordered" evidence="3">
    <location>
        <begin position="24"/>
        <end position="48"/>
    </location>
</feature>
<feature type="compositionally biased region" description="Acidic residues" evidence="3">
    <location>
        <begin position="30"/>
        <end position="42"/>
    </location>
</feature>
<protein>
    <recommendedName>
        <fullName evidence="5 7">Preprofallaxidin-4</fullName>
    </recommendedName>
    <component>
        <recommendedName>
            <fullName>Fallaxidin-4.2</fullName>
        </recommendedName>
    </component>
</protein>
<name>FALX4_LITFA</name>
<organism>
    <name type="scientific">Litoria fallax</name>
    <name type="common">Eastern dwarf tree frog</name>
    <name type="synonym">Hylomantis fallax</name>
    <dbReference type="NCBI Taxonomy" id="115422"/>
    <lineage>
        <taxon>Eukaryota</taxon>
        <taxon>Metazoa</taxon>
        <taxon>Chordata</taxon>
        <taxon>Craniata</taxon>
        <taxon>Vertebrata</taxon>
        <taxon>Euteleostomi</taxon>
        <taxon>Amphibia</taxon>
        <taxon>Batrachia</taxon>
        <taxon>Anura</taxon>
        <taxon>Neobatrachia</taxon>
        <taxon>Hyloidea</taxon>
        <taxon>Hylidae</taxon>
        <taxon>Pelodryadinae</taxon>
        <taxon>Litoria</taxon>
    </lineage>
</organism>
<accession>B5LUQ5</accession>
<proteinExistence type="evidence at transcript level"/>
<keyword id="KW-0878">Amphibian defense peptide</keyword>
<keyword id="KW-0964">Secreted</keyword>
<keyword id="KW-0732">Signal</keyword>
<comment type="subcellular location">
    <subcellularLocation>
        <location evidence="1">Secreted</location>
    </subcellularLocation>
</comment>
<comment type="tissue specificity">
    <text evidence="4">Expressed by the skin glands.</text>
</comment>
<comment type="similarity">
    <text evidence="2">Belongs to the frog skin active peptide (FSAP) family. Dermaseptin subfamily.</text>
</comment>